<gene>
    <name evidence="3" type="primary">TotZ</name>
    <name type="ORF">GE25696</name>
</gene>
<feature type="signal peptide" evidence="2">
    <location>
        <begin position="1"/>
        <end position="23"/>
    </location>
</feature>
<feature type="chain" id="PRO_0000355011" description="Protein Turandot Z">
    <location>
        <begin position="24"/>
        <end position="141"/>
    </location>
</feature>
<accession>B4PPU6</accession>
<evidence type="ECO:0000250" key="1">
    <source>
        <dbReference type="UniProtKB" id="Q8IN41"/>
    </source>
</evidence>
<evidence type="ECO:0000255" key="2"/>
<evidence type="ECO:0000312" key="3">
    <source>
        <dbReference type="EMBL" id="EDW96196.1"/>
    </source>
</evidence>
<protein>
    <recommendedName>
        <fullName>Protein Turandot Z</fullName>
    </recommendedName>
</protein>
<sequence length="141" mass="15726">MYFAIRLSFVLAVLFCLTGNGNARMLGADFNRLQQLQRRSHQSNDANTQLKIAYEVIGIYDKYKGQKGSDLLREAQLNSEVNDFKRKNVVVDGVPAQGGGIKDAVKKIADEVPDDVKKNAKDIAVKIAKSVTKSIFKYFLN</sequence>
<reference evidence="3" key="1">
    <citation type="journal article" date="2007" name="Nature">
        <title>Evolution of genes and genomes on the Drosophila phylogeny.</title>
        <authorList>
            <consortium name="Drosophila 12 genomes consortium"/>
        </authorList>
    </citation>
    <scope>NUCLEOTIDE SEQUENCE [LARGE SCALE GENOMIC DNA]</scope>
    <source>
        <strain evidence="3">Tai18E2 / Tucson 14021-0261.01</strain>
    </source>
</reference>
<name>TOTZ_DROYA</name>
<organism>
    <name type="scientific">Drosophila yakuba</name>
    <name type="common">Fruit fly</name>
    <dbReference type="NCBI Taxonomy" id="7245"/>
    <lineage>
        <taxon>Eukaryota</taxon>
        <taxon>Metazoa</taxon>
        <taxon>Ecdysozoa</taxon>
        <taxon>Arthropoda</taxon>
        <taxon>Hexapoda</taxon>
        <taxon>Insecta</taxon>
        <taxon>Pterygota</taxon>
        <taxon>Neoptera</taxon>
        <taxon>Endopterygota</taxon>
        <taxon>Diptera</taxon>
        <taxon>Brachycera</taxon>
        <taxon>Muscomorpha</taxon>
        <taxon>Ephydroidea</taxon>
        <taxon>Drosophilidae</taxon>
        <taxon>Drosophila</taxon>
        <taxon>Sophophora</taxon>
    </lineage>
</organism>
<comment type="function">
    <text evidence="1">A humoral factor that may play a role in stress tolerance.</text>
</comment>
<comment type="subcellular location">
    <subcellularLocation>
        <location evidence="1">Secreted</location>
    </subcellularLocation>
</comment>
<comment type="similarity">
    <text evidence="2">Belongs to the Turandot family.</text>
</comment>
<dbReference type="EMBL" id="CM000160">
    <property type="protein sequence ID" value="EDW96196.1"/>
    <property type="molecule type" value="Genomic_DNA"/>
</dbReference>
<dbReference type="SMR" id="B4PPU6"/>
<dbReference type="EnsemblMetazoa" id="FBtr0272214">
    <property type="protein sequence ID" value="FBpp0270706"/>
    <property type="gene ID" value="FBgn0242754"/>
</dbReference>
<dbReference type="EnsemblMetazoa" id="XM_002096448.3">
    <property type="protein sequence ID" value="XP_002096484.1"/>
    <property type="gene ID" value="LOC6535865"/>
</dbReference>
<dbReference type="GeneID" id="6535865"/>
<dbReference type="KEGG" id="dya:Dyak_GE25696"/>
<dbReference type="HOGENOM" id="CLU_1760725_0_0_1"/>
<dbReference type="OMA" id="GFWSCIS"/>
<dbReference type="OrthoDB" id="7843604at2759"/>
<dbReference type="PhylomeDB" id="B4PPU6"/>
<dbReference type="Proteomes" id="UP000002282">
    <property type="component" value="Chromosome 3R"/>
</dbReference>
<dbReference type="GO" id="GO:0005615">
    <property type="term" value="C:extracellular space"/>
    <property type="evidence" value="ECO:0000250"/>
    <property type="project" value="UniProtKB"/>
</dbReference>
<dbReference type="GO" id="GO:0034605">
    <property type="term" value="P:cellular response to heat"/>
    <property type="evidence" value="ECO:0007669"/>
    <property type="project" value="EnsemblMetazoa"/>
</dbReference>
<dbReference type="GO" id="GO:0034599">
    <property type="term" value="P:cellular response to oxidative stress"/>
    <property type="evidence" value="ECO:0007669"/>
    <property type="project" value="EnsemblMetazoa"/>
</dbReference>
<dbReference type="GO" id="GO:0034644">
    <property type="term" value="P:cellular response to UV"/>
    <property type="evidence" value="ECO:0007669"/>
    <property type="project" value="EnsemblMetazoa"/>
</dbReference>
<dbReference type="GO" id="GO:0045087">
    <property type="term" value="P:innate immune response"/>
    <property type="evidence" value="ECO:0007669"/>
    <property type="project" value="UniProtKB-KW"/>
</dbReference>
<dbReference type="GO" id="GO:0009617">
    <property type="term" value="P:response to bacterium"/>
    <property type="evidence" value="ECO:0007669"/>
    <property type="project" value="EnsemblMetazoa"/>
</dbReference>
<dbReference type="GO" id="GO:0009408">
    <property type="term" value="P:response to heat"/>
    <property type="evidence" value="ECO:0000250"/>
    <property type="project" value="UniProtKB"/>
</dbReference>
<dbReference type="GO" id="GO:0006979">
    <property type="term" value="P:response to oxidative stress"/>
    <property type="evidence" value="ECO:0000250"/>
    <property type="project" value="UniProtKB"/>
</dbReference>
<dbReference type="GO" id="GO:0009411">
    <property type="term" value="P:response to UV"/>
    <property type="evidence" value="ECO:0000250"/>
    <property type="project" value="UniProtKB"/>
</dbReference>
<dbReference type="InterPro" id="IPR010825">
    <property type="entry name" value="Turandot"/>
</dbReference>
<dbReference type="Pfam" id="PF07240">
    <property type="entry name" value="Turandot"/>
    <property type="match status" value="1"/>
</dbReference>
<proteinExistence type="inferred from homology"/>
<keyword id="KW-0391">Immunity</keyword>
<keyword id="KW-0399">Innate immunity</keyword>
<keyword id="KW-0964">Secreted</keyword>
<keyword id="KW-0732">Signal</keyword>